<organism>
    <name type="scientific">Anaeromyxobacter sp. (strain Fw109-5)</name>
    <dbReference type="NCBI Taxonomy" id="404589"/>
    <lineage>
        <taxon>Bacteria</taxon>
        <taxon>Pseudomonadati</taxon>
        <taxon>Myxococcota</taxon>
        <taxon>Myxococcia</taxon>
        <taxon>Myxococcales</taxon>
        <taxon>Cystobacterineae</taxon>
        <taxon>Anaeromyxobacteraceae</taxon>
        <taxon>Anaeromyxobacter</taxon>
    </lineage>
</organism>
<keyword id="KW-0012">Acyltransferase</keyword>
<keyword id="KW-0963">Cytoplasm</keyword>
<keyword id="KW-0441">Lipid A biosynthesis</keyword>
<keyword id="KW-0444">Lipid biosynthesis</keyword>
<keyword id="KW-0443">Lipid metabolism</keyword>
<keyword id="KW-1185">Reference proteome</keyword>
<keyword id="KW-0677">Repeat</keyword>
<keyword id="KW-0808">Transferase</keyword>
<proteinExistence type="inferred from homology"/>
<protein>
    <recommendedName>
        <fullName evidence="1">Acyl-[acyl-carrier-protein]--UDP-N-acetylglucosamine O-acyltransferase</fullName>
        <shortName evidence="1">UDP-N-acetylglucosamine acyltransferase</shortName>
        <ecNumber evidence="1">2.3.1.129</ecNumber>
    </recommendedName>
</protein>
<gene>
    <name evidence="1" type="primary">lpxA</name>
    <name type="ordered locus">Anae109_1124</name>
</gene>
<dbReference type="EC" id="2.3.1.129" evidence="1"/>
<dbReference type="EMBL" id="CP000769">
    <property type="protein sequence ID" value="ABS25332.1"/>
    <property type="molecule type" value="Genomic_DNA"/>
</dbReference>
<dbReference type="RefSeq" id="WP_011985438.1">
    <property type="nucleotide sequence ID" value="NC_009675.1"/>
</dbReference>
<dbReference type="SMR" id="A7H9D6"/>
<dbReference type="STRING" id="404589.Anae109_1124"/>
<dbReference type="KEGG" id="afw:Anae109_1124"/>
<dbReference type="eggNOG" id="COG1043">
    <property type="taxonomic scope" value="Bacteria"/>
</dbReference>
<dbReference type="HOGENOM" id="CLU_061249_0_0_7"/>
<dbReference type="OrthoDB" id="9807278at2"/>
<dbReference type="UniPathway" id="UPA00359">
    <property type="reaction ID" value="UER00477"/>
</dbReference>
<dbReference type="Proteomes" id="UP000006382">
    <property type="component" value="Chromosome"/>
</dbReference>
<dbReference type="GO" id="GO:0005737">
    <property type="term" value="C:cytoplasm"/>
    <property type="evidence" value="ECO:0007669"/>
    <property type="project" value="UniProtKB-SubCell"/>
</dbReference>
<dbReference type="GO" id="GO:0016020">
    <property type="term" value="C:membrane"/>
    <property type="evidence" value="ECO:0007669"/>
    <property type="project" value="GOC"/>
</dbReference>
<dbReference type="GO" id="GO:0008780">
    <property type="term" value="F:acyl-[acyl-carrier-protein]-UDP-N-acetylglucosamine O-acyltransferase activity"/>
    <property type="evidence" value="ECO:0007669"/>
    <property type="project" value="UniProtKB-UniRule"/>
</dbReference>
<dbReference type="GO" id="GO:0009245">
    <property type="term" value="P:lipid A biosynthetic process"/>
    <property type="evidence" value="ECO:0007669"/>
    <property type="project" value="UniProtKB-UniRule"/>
</dbReference>
<dbReference type="CDD" id="cd03351">
    <property type="entry name" value="LbH_UDP-GlcNAc_AT"/>
    <property type="match status" value="1"/>
</dbReference>
<dbReference type="Gene3D" id="2.160.10.10">
    <property type="entry name" value="Hexapeptide repeat proteins"/>
    <property type="match status" value="1"/>
</dbReference>
<dbReference type="Gene3D" id="1.20.1180.10">
    <property type="entry name" value="Udp N-acetylglucosamine O-acyltransferase, C-terminal domain"/>
    <property type="match status" value="1"/>
</dbReference>
<dbReference type="HAMAP" id="MF_00387">
    <property type="entry name" value="LpxA"/>
    <property type="match status" value="1"/>
</dbReference>
<dbReference type="InterPro" id="IPR029098">
    <property type="entry name" value="Acetyltransf_C"/>
</dbReference>
<dbReference type="InterPro" id="IPR037157">
    <property type="entry name" value="Acetyltransf_C_sf"/>
</dbReference>
<dbReference type="InterPro" id="IPR001451">
    <property type="entry name" value="Hexapep"/>
</dbReference>
<dbReference type="InterPro" id="IPR010137">
    <property type="entry name" value="Lipid_A_LpxA"/>
</dbReference>
<dbReference type="InterPro" id="IPR011004">
    <property type="entry name" value="Trimer_LpxA-like_sf"/>
</dbReference>
<dbReference type="NCBIfam" id="TIGR01852">
    <property type="entry name" value="lipid_A_lpxA"/>
    <property type="match status" value="1"/>
</dbReference>
<dbReference type="NCBIfam" id="NF003657">
    <property type="entry name" value="PRK05289.1"/>
    <property type="match status" value="1"/>
</dbReference>
<dbReference type="PANTHER" id="PTHR43480">
    <property type="entry name" value="ACYL-[ACYL-CARRIER-PROTEIN]--UDP-N-ACETYLGLUCOSAMINE O-ACYLTRANSFERASE"/>
    <property type="match status" value="1"/>
</dbReference>
<dbReference type="PANTHER" id="PTHR43480:SF1">
    <property type="entry name" value="ACYL-[ACYL-CARRIER-PROTEIN]--UDP-N-ACETYLGLUCOSAMINE O-ACYLTRANSFERASE, MITOCHONDRIAL-RELATED"/>
    <property type="match status" value="1"/>
</dbReference>
<dbReference type="Pfam" id="PF13720">
    <property type="entry name" value="Acetyltransf_11"/>
    <property type="match status" value="1"/>
</dbReference>
<dbReference type="Pfam" id="PF00132">
    <property type="entry name" value="Hexapep"/>
    <property type="match status" value="1"/>
</dbReference>
<dbReference type="PIRSF" id="PIRSF000456">
    <property type="entry name" value="UDP-GlcNAc_acltr"/>
    <property type="match status" value="1"/>
</dbReference>
<dbReference type="SUPFAM" id="SSF51161">
    <property type="entry name" value="Trimeric LpxA-like enzymes"/>
    <property type="match status" value="1"/>
</dbReference>
<reference key="1">
    <citation type="journal article" date="2015" name="Genome Announc.">
        <title>Complete genome sequence of Anaeromyxobacter sp. Fw109-5, an anaerobic, metal-reducing bacterium isolated from a contaminated subsurface environment.</title>
        <authorList>
            <person name="Hwang C."/>
            <person name="Copeland A."/>
            <person name="Lucas S."/>
            <person name="Lapidus A."/>
            <person name="Barry K."/>
            <person name="Glavina Del Rio T."/>
            <person name="Dalin E."/>
            <person name="Tice H."/>
            <person name="Pitluck S."/>
            <person name="Sims D."/>
            <person name="Brettin T."/>
            <person name="Bruce D.C."/>
            <person name="Detter J.C."/>
            <person name="Han C.S."/>
            <person name="Schmutz J."/>
            <person name="Larimer F.W."/>
            <person name="Land M.L."/>
            <person name="Hauser L.J."/>
            <person name="Kyrpides N."/>
            <person name="Lykidis A."/>
            <person name="Richardson P."/>
            <person name="Belieav A."/>
            <person name="Sanford R.A."/>
            <person name="Loeffler F.E."/>
            <person name="Fields M.W."/>
        </authorList>
    </citation>
    <scope>NUCLEOTIDE SEQUENCE [LARGE SCALE GENOMIC DNA]</scope>
    <source>
        <strain>Fw109-5</strain>
    </source>
</reference>
<name>LPXA_ANADF</name>
<feature type="chain" id="PRO_1000013146" description="Acyl-[acyl-carrier-protein]--UDP-N-acetylglucosamine O-acyltransferase">
    <location>
        <begin position="1"/>
        <end position="257"/>
    </location>
</feature>
<comment type="function">
    <text evidence="1">Involved in the biosynthesis of lipid A, a phosphorylated glycolipid that anchors the lipopolysaccharide to the outer membrane of the cell.</text>
</comment>
<comment type="catalytic activity">
    <reaction evidence="1">
        <text>a (3R)-hydroxyacyl-[ACP] + UDP-N-acetyl-alpha-D-glucosamine = a UDP-3-O-[(3R)-3-hydroxyacyl]-N-acetyl-alpha-D-glucosamine + holo-[ACP]</text>
        <dbReference type="Rhea" id="RHEA:67812"/>
        <dbReference type="Rhea" id="RHEA-COMP:9685"/>
        <dbReference type="Rhea" id="RHEA-COMP:9945"/>
        <dbReference type="ChEBI" id="CHEBI:57705"/>
        <dbReference type="ChEBI" id="CHEBI:64479"/>
        <dbReference type="ChEBI" id="CHEBI:78827"/>
        <dbReference type="ChEBI" id="CHEBI:173225"/>
        <dbReference type="EC" id="2.3.1.129"/>
    </reaction>
</comment>
<comment type="pathway">
    <text evidence="1">Glycolipid biosynthesis; lipid IV(A) biosynthesis; lipid IV(A) from (3R)-3-hydroxytetradecanoyl-[acyl-carrier-protein] and UDP-N-acetyl-alpha-D-glucosamine: step 1/6.</text>
</comment>
<comment type="subunit">
    <text evidence="1">Homotrimer.</text>
</comment>
<comment type="subcellular location">
    <subcellularLocation>
        <location evidence="1">Cytoplasm</location>
    </subcellularLocation>
</comment>
<comment type="similarity">
    <text evidence="1">Belongs to the transferase hexapeptide repeat family. LpxA subfamily.</text>
</comment>
<evidence type="ECO:0000255" key="1">
    <source>
        <dbReference type="HAMAP-Rule" id="MF_00387"/>
    </source>
</evidence>
<sequence length="257" mass="26854">MAIHPTAVVEPGAQVDPSAEIGALAVVGPHVRVGPRTVVGPHAVLAGRTTLGEGNRIFPHAVVGEVPQDLKYRGEPTELVVGDRNTFREGVTISTGTVQGGGVTRIGSGCLFMANSHVGHDCVIGDGAIIANSVALAGHVELEDHVHFSGLAAAHQFCRIGRLAFVSGLTGVTMDVPPFCTVAGPRAELAGLNAVGMQRAGLSEERIGRVKQAYKIVFRSNLGLAEAIAQVEAELGMHEDVAHFVRFLKGTQRGITR</sequence>
<accession>A7H9D6</accession>